<accession>Q5ZUM5</accession>
<proteinExistence type="inferred from homology"/>
<comment type="function">
    <text evidence="1">Functions in the N-end rule pathway of protein degradation where it conjugates Leu, Phe and, less efficiently, Met from aminoacyl-tRNAs to the N-termini of proteins containing an N-terminal arginine or lysine.</text>
</comment>
<comment type="catalytic activity">
    <reaction evidence="1">
        <text>N-terminal L-lysyl-[protein] + L-leucyl-tRNA(Leu) = N-terminal L-leucyl-L-lysyl-[protein] + tRNA(Leu) + H(+)</text>
        <dbReference type="Rhea" id="RHEA:12340"/>
        <dbReference type="Rhea" id="RHEA-COMP:9613"/>
        <dbReference type="Rhea" id="RHEA-COMP:9622"/>
        <dbReference type="Rhea" id="RHEA-COMP:12670"/>
        <dbReference type="Rhea" id="RHEA-COMP:12671"/>
        <dbReference type="ChEBI" id="CHEBI:15378"/>
        <dbReference type="ChEBI" id="CHEBI:65249"/>
        <dbReference type="ChEBI" id="CHEBI:78442"/>
        <dbReference type="ChEBI" id="CHEBI:78494"/>
        <dbReference type="ChEBI" id="CHEBI:133043"/>
        <dbReference type="EC" id="2.3.2.6"/>
    </reaction>
</comment>
<comment type="catalytic activity">
    <reaction evidence="1">
        <text>N-terminal L-arginyl-[protein] + L-leucyl-tRNA(Leu) = N-terminal L-leucyl-L-arginyl-[protein] + tRNA(Leu) + H(+)</text>
        <dbReference type="Rhea" id="RHEA:50416"/>
        <dbReference type="Rhea" id="RHEA-COMP:9613"/>
        <dbReference type="Rhea" id="RHEA-COMP:9622"/>
        <dbReference type="Rhea" id="RHEA-COMP:12672"/>
        <dbReference type="Rhea" id="RHEA-COMP:12673"/>
        <dbReference type="ChEBI" id="CHEBI:15378"/>
        <dbReference type="ChEBI" id="CHEBI:64719"/>
        <dbReference type="ChEBI" id="CHEBI:78442"/>
        <dbReference type="ChEBI" id="CHEBI:78494"/>
        <dbReference type="ChEBI" id="CHEBI:133044"/>
        <dbReference type="EC" id="2.3.2.6"/>
    </reaction>
</comment>
<comment type="catalytic activity">
    <reaction evidence="1">
        <text>L-phenylalanyl-tRNA(Phe) + an N-terminal L-alpha-aminoacyl-[protein] = an N-terminal L-phenylalanyl-L-alpha-aminoacyl-[protein] + tRNA(Phe)</text>
        <dbReference type="Rhea" id="RHEA:43632"/>
        <dbReference type="Rhea" id="RHEA-COMP:9668"/>
        <dbReference type="Rhea" id="RHEA-COMP:9699"/>
        <dbReference type="Rhea" id="RHEA-COMP:10636"/>
        <dbReference type="Rhea" id="RHEA-COMP:10637"/>
        <dbReference type="ChEBI" id="CHEBI:78442"/>
        <dbReference type="ChEBI" id="CHEBI:78531"/>
        <dbReference type="ChEBI" id="CHEBI:78597"/>
        <dbReference type="ChEBI" id="CHEBI:83561"/>
        <dbReference type="EC" id="2.3.2.6"/>
    </reaction>
</comment>
<comment type="subcellular location">
    <subcellularLocation>
        <location evidence="1">Cytoplasm</location>
    </subcellularLocation>
</comment>
<comment type="similarity">
    <text evidence="1">Belongs to the L/F-transferase family.</text>
</comment>
<keyword id="KW-0012">Acyltransferase</keyword>
<keyword id="KW-0963">Cytoplasm</keyword>
<keyword id="KW-1185">Reference proteome</keyword>
<keyword id="KW-0808">Transferase</keyword>
<dbReference type="EC" id="2.3.2.6" evidence="1"/>
<dbReference type="EMBL" id="AE017354">
    <property type="protein sequence ID" value="AAU27847.1"/>
    <property type="molecule type" value="Genomic_DNA"/>
</dbReference>
<dbReference type="RefSeq" id="WP_010947494.1">
    <property type="nucleotide sequence ID" value="NC_002942.5"/>
</dbReference>
<dbReference type="RefSeq" id="YP_095794.1">
    <property type="nucleotide sequence ID" value="NC_002942.5"/>
</dbReference>
<dbReference type="SMR" id="Q5ZUM5"/>
<dbReference type="STRING" id="272624.lpg1768"/>
<dbReference type="PaxDb" id="272624-lpg1768"/>
<dbReference type="GeneID" id="57035757"/>
<dbReference type="KEGG" id="lpn:lpg1768"/>
<dbReference type="PATRIC" id="fig|272624.6.peg.1853"/>
<dbReference type="eggNOG" id="COG2360">
    <property type="taxonomic scope" value="Bacteria"/>
</dbReference>
<dbReference type="HOGENOM" id="CLU_075045_0_0_6"/>
<dbReference type="OrthoDB" id="9790282at2"/>
<dbReference type="Proteomes" id="UP000000609">
    <property type="component" value="Chromosome"/>
</dbReference>
<dbReference type="GO" id="GO:0005737">
    <property type="term" value="C:cytoplasm"/>
    <property type="evidence" value="ECO:0007669"/>
    <property type="project" value="UniProtKB-SubCell"/>
</dbReference>
<dbReference type="GO" id="GO:0008914">
    <property type="term" value="F:leucyl-tRNA--protein transferase activity"/>
    <property type="evidence" value="ECO:0007669"/>
    <property type="project" value="UniProtKB-UniRule"/>
</dbReference>
<dbReference type="GO" id="GO:0030163">
    <property type="term" value="P:protein catabolic process"/>
    <property type="evidence" value="ECO:0007669"/>
    <property type="project" value="UniProtKB-UniRule"/>
</dbReference>
<dbReference type="FunFam" id="3.30.70.3550:FF:000001">
    <property type="entry name" value="Leucyl/phenylalanyl-tRNA--protein transferase"/>
    <property type="match status" value="1"/>
</dbReference>
<dbReference type="FunFam" id="3.40.630.70:FF:000001">
    <property type="entry name" value="Leucyl/phenylalanyl-tRNA--protein transferase"/>
    <property type="match status" value="1"/>
</dbReference>
<dbReference type="Gene3D" id="3.40.630.70">
    <property type="entry name" value="Leucyl/phenylalanyl-tRNA-protein transferase, C-terminal domain"/>
    <property type="match status" value="1"/>
</dbReference>
<dbReference type="Gene3D" id="3.30.70.3550">
    <property type="entry name" value="Leucyl/phenylalanyl-tRNA-protein transferase, N-terminal domain"/>
    <property type="match status" value="1"/>
</dbReference>
<dbReference type="HAMAP" id="MF_00688">
    <property type="entry name" value="Leu_Phe_trans"/>
    <property type="match status" value="1"/>
</dbReference>
<dbReference type="InterPro" id="IPR016181">
    <property type="entry name" value="Acyl_CoA_acyltransferase"/>
</dbReference>
<dbReference type="InterPro" id="IPR004616">
    <property type="entry name" value="Leu/Phe-tRNA_Trfase"/>
</dbReference>
<dbReference type="InterPro" id="IPR042203">
    <property type="entry name" value="Leu/Phe-tRNA_Trfase_C"/>
</dbReference>
<dbReference type="InterPro" id="IPR042221">
    <property type="entry name" value="Leu/Phe-tRNA_Trfase_N"/>
</dbReference>
<dbReference type="NCBIfam" id="TIGR00667">
    <property type="entry name" value="aat"/>
    <property type="match status" value="1"/>
</dbReference>
<dbReference type="PANTHER" id="PTHR30098">
    <property type="entry name" value="LEUCYL/PHENYLALANYL-TRNA--PROTEIN TRANSFERASE"/>
    <property type="match status" value="1"/>
</dbReference>
<dbReference type="PANTHER" id="PTHR30098:SF2">
    <property type="entry name" value="LEUCYL_PHENYLALANYL-TRNA--PROTEIN TRANSFERASE"/>
    <property type="match status" value="1"/>
</dbReference>
<dbReference type="Pfam" id="PF03588">
    <property type="entry name" value="Leu_Phe_trans"/>
    <property type="match status" value="1"/>
</dbReference>
<dbReference type="SUPFAM" id="SSF55729">
    <property type="entry name" value="Acyl-CoA N-acyltransferases (Nat)"/>
    <property type="match status" value="1"/>
</dbReference>
<protein>
    <recommendedName>
        <fullName evidence="1">Leucyl/phenylalanyl-tRNA--protein transferase</fullName>
        <ecNumber evidence="1">2.3.2.6</ecNumber>
    </recommendedName>
    <alternativeName>
        <fullName evidence="1">L/F-transferase</fullName>
    </alternativeName>
    <alternativeName>
        <fullName evidence="1">Leucyltransferase</fullName>
    </alternativeName>
    <alternativeName>
        <fullName evidence="1">Phenyalanyltransferase</fullName>
    </alternativeName>
</protein>
<gene>
    <name evidence="1" type="primary">aat</name>
    <name type="ordered locus">lpg1768</name>
</gene>
<feature type="chain" id="PRO_0000207224" description="Leucyl/phenylalanyl-tRNA--protein transferase">
    <location>
        <begin position="1"/>
        <end position="222"/>
    </location>
</feature>
<sequence length="222" mass="25473">MAYDSNYTFPDPETSDKQGLLAIGGVLTPKRVLQAYSQGIFPWYEPGNPVLWWSPNPRLILIPNEFKISRSLKKTLKKPFKLTVDTAFQRVISYCATCSDRSNKTWITSEMIETYTQLHEMGYAHSFEIWDGSELVGGLYGISLGHAFFGESMFHTITDASKVALHFLCRIMQSWNFDFIDCQLPTLHLMSLGAKIISRKEFLHMLQETLKYPDKKGNWSID</sequence>
<organism>
    <name type="scientific">Legionella pneumophila subsp. pneumophila (strain Philadelphia 1 / ATCC 33152 / DSM 7513)</name>
    <dbReference type="NCBI Taxonomy" id="272624"/>
    <lineage>
        <taxon>Bacteria</taxon>
        <taxon>Pseudomonadati</taxon>
        <taxon>Pseudomonadota</taxon>
        <taxon>Gammaproteobacteria</taxon>
        <taxon>Legionellales</taxon>
        <taxon>Legionellaceae</taxon>
        <taxon>Legionella</taxon>
    </lineage>
</organism>
<reference key="1">
    <citation type="journal article" date="2004" name="Science">
        <title>The genomic sequence of the accidental pathogen Legionella pneumophila.</title>
        <authorList>
            <person name="Chien M."/>
            <person name="Morozova I."/>
            <person name="Shi S."/>
            <person name="Sheng H."/>
            <person name="Chen J."/>
            <person name="Gomez S.M."/>
            <person name="Asamani G."/>
            <person name="Hill K."/>
            <person name="Nuara J."/>
            <person name="Feder M."/>
            <person name="Rineer J."/>
            <person name="Greenberg J.J."/>
            <person name="Steshenko V."/>
            <person name="Park S.H."/>
            <person name="Zhao B."/>
            <person name="Teplitskaya E."/>
            <person name="Edwards J.R."/>
            <person name="Pampou S."/>
            <person name="Georghiou A."/>
            <person name="Chou I.-C."/>
            <person name="Iannuccilli W."/>
            <person name="Ulz M.E."/>
            <person name="Kim D.H."/>
            <person name="Geringer-Sameth A."/>
            <person name="Goldsberry C."/>
            <person name="Morozov P."/>
            <person name="Fischer S.G."/>
            <person name="Segal G."/>
            <person name="Qu X."/>
            <person name="Rzhetsky A."/>
            <person name="Zhang P."/>
            <person name="Cayanis E."/>
            <person name="De Jong P.J."/>
            <person name="Ju J."/>
            <person name="Kalachikov S."/>
            <person name="Shuman H.A."/>
            <person name="Russo J.J."/>
        </authorList>
    </citation>
    <scope>NUCLEOTIDE SEQUENCE [LARGE SCALE GENOMIC DNA]</scope>
    <source>
        <strain>Philadelphia 1 / ATCC 33152 / DSM 7513</strain>
    </source>
</reference>
<name>LFTR_LEGPH</name>
<evidence type="ECO:0000255" key="1">
    <source>
        <dbReference type="HAMAP-Rule" id="MF_00688"/>
    </source>
</evidence>